<keyword id="KW-0007">Acetylation</keyword>
<keyword id="KW-0963">Cytoplasm</keyword>
<keyword id="KW-0489">Methyltransferase</keyword>
<keyword id="KW-0597">Phosphoprotein</keyword>
<keyword id="KW-0949">S-adenosyl-L-methionine</keyword>
<keyword id="KW-0808">Transferase</keyword>
<evidence type="ECO:0000250" key="1"/>
<evidence type="ECO:0000250" key="2">
    <source>
        <dbReference type="UniProtKB" id="P51580"/>
    </source>
</evidence>
<evidence type="ECO:0000305" key="3"/>
<accession>Q3BCR4</accession>
<feature type="chain" id="PRO_0000220098" description="Thiopurine S-methyltransferase">
    <location>
        <begin position="1"/>
        <end position="245"/>
    </location>
</feature>
<feature type="binding site" evidence="1">
    <location>
        <begin position="29"/>
        <end position="40"/>
    </location>
    <ligand>
        <name>S-adenosyl-L-methionine</name>
        <dbReference type="ChEBI" id="CHEBI:59789"/>
    </ligand>
</feature>
<feature type="binding site" evidence="1">
    <location>
        <position position="40"/>
    </location>
    <ligand>
        <name>substrate</name>
    </ligand>
</feature>
<feature type="binding site" evidence="1">
    <location>
        <position position="69"/>
    </location>
    <ligand>
        <name>S-adenosyl-L-methionine</name>
        <dbReference type="ChEBI" id="CHEBI:59789"/>
    </ligand>
</feature>
<feature type="binding site" evidence="1">
    <location>
        <position position="90"/>
    </location>
    <ligand>
        <name>S-adenosyl-L-methionine</name>
        <dbReference type="ChEBI" id="CHEBI:59789"/>
    </ligand>
</feature>
<feature type="binding site" evidence="1">
    <location>
        <begin position="134"/>
        <end position="135"/>
    </location>
    <ligand>
        <name>S-adenosyl-L-methionine</name>
        <dbReference type="ChEBI" id="CHEBI:59789"/>
    </ligand>
</feature>
<feature type="binding site" evidence="1">
    <location>
        <position position="152"/>
    </location>
    <ligand>
        <name>S-adenosyl-L-methionine</name>
        <dbReference type="ChEBI" id="CHEBI:59789"/>
    </ligand>
</feature>
<feature type="modified residue" description="Phosphoserine" evidence="2">
    <location>
        <position position="14"/>
    </location>
</feature>
<feature type="modified residue" description="N6-acetyllysine" evidence="2">
    <location>
        <position position="58"/>
    </location>
</feature>
<reference key="1">
    <citation type="journal article" date="2005" name="Pharmacogenet. Genomics">
        <title>Thiopurine S-methyltransferase pharmacogenetics: variant allele functional and comparative genomics.</title>
        <authorList>
            <person name="Salavaggione O.E."/>
            <person name="Wang L."/>
            <person name="Wiepert M."/>
            <person name="Yee V.C."/>
            <person name="Weinshilboum R.M."/>
        </authorList>
    </citation>
    <scope>NUCLEOTIDE SEQUENCE [MRNA]</scope>
</reference>
<organism>
    <name type="scientific">Chlorocebus aethiops</name>
    <name type="common">Green monkey</name>
    <name type="synonym">Cercopithecus aethiops</name>
    <dbReference type="NCBI Taxonomy" id="9534"/>
    <lineage>
        <taxon>Eukaryota</taxon>
        <taxon>Metazoa</taxon>
        <taxon>Chordata</taxon>
        <taxon>Craniata</taxon>
        <taxon>Vertebrata</taxon>
        <taxon>Euteleostomi</taxon>
        <taxon>Mammalia</taxon>
        <taxon>Eutheria</taxon>
        <taxon>Euarchontoglires</taxon>
        <taxon>Primates</taxon>
        <taxon>Haplorrhini</taxon>
        <taxon>Catarrhini</taxon>
        <taxon>Cercopithecidae</taxon>
        <taxon>Cercopithecinae</taxon>
        <taxon>Chlorocebus</taxon>
    </lineage>
</organism>
<proteinExistence type="evidence at transcript level"/>
<dbReference type="EC" id="2.1.1.67"/>
<dbReference type="EMBL" id="AY827078">
    <property type="protein sequence ID" value="AAX37642.1"/>
    <property type="molecule type" value="mRNA"/>
</dbReference>
<dbReference type="SMR" id="Q3BCR4"/>
<dbReference type="GO" id="GO:0005737">
    <property type="term" value="C:cytoplasm"/>
    <property type="evidence" value="ECO:0007669"/>
    <property type="project" value="UniProtKB-SubCell"/>
</dbReference>
<dbReference type="GO" id="GO:0008119">
    <property type="term" value="F:thiopurine S-methyltransferase activity"/>
    <property type="evidence" value="ECO:0007669"/>
    <property type="project" value="UniProtKB-EC"/>
</dbReference>
<dbReference type="GO" id="GO:0032259">
    <property type="term" value="P:methylation"/>
    <property type="evidence" value="ECO:0007669"/>
    <property type="project" value="UniProtKB-KW"/>
</dbReference>
<dbReference type="FunFam" id="3.40.50.150:FF:000101">
    <property type="entry name" value="Thiopurine S-methyltransferase"/>
    <property type="match status" value="1"/>
</dbReference>
<dbReference type="Gene3D" id="3.40.50.150">
    <property type="entry name" value="Vaccinia Virus protein VP39"/>
    <property type="match status" value="1"/>
</dbReference>
<dbReference type="HAMAP" id="MF_00812">
    <property type="entry name" value="Thiopur_methtran"/>
    <property type="match status" value="1"/>
</dbReference>
<dbReference type="InterPro" id="IPR029063">
    <property type="entry name" value="SAM-dependent_MTases_sf"/>
</dbReference>
<dbReference type="InterPro" id="IPR025835">
    <property type="entry name" value="Thiopurine_S-MeTrfase"/>
</dbReference>
<dbReference type="InterPro" id="IPR008854">
    <property type="entry name" value="TPMT"/>
</dbReference>
<dbReference type="PANTHER" id="PTHR10259">
    <property type="entry name" value="THIOPURINE S-METHYLTRANSFERASE"/>
    <property type="match status" value="1"/>
</dbReference>
<dbReference type="PANTHER" id="PTHR10259:SF11">
    <property type="entry name" value="THIOPURINE S-METHYLTRANSFERASE"/>
    <property type="match status" value="1"/>
</dbReference>
<dbReference type="Pfam" id="PF05724">
    <property type="entry name" value="TPMT"/>
    <property type="match status" value="1"/>
</dbReference>
<dbReference type="PIRSF" id="PIRSF023956">
    <property type="entry name" value="Thiopurine_S-methyltransferase"/>
    <property type="match status" value="1"/>
</dbReference>
<dbReference type="SUPFAM" id="SSF53335">
    <property type="entry name" value="S-adenosyl-L-methionine-dependent methyltransferases"/>
    <property type="match status" value="1"/>
</dbReference>
<dbReference type="PROSITE" id="PS51585">
    <property type="entry name" value="SAM_MT_TPMT"/>
    <property type="match status" value="1"/>
</dbReference>
<sequence>MDGSRTSLDIEEYSNTEVQKNQVLTLEEWQDKWVNGKTAFHLEQGHQLLKKHLDTFLKGKSGLRVFFPLCGKAVEMKWFANRGHSVVGVEISELGIREFFTEQNLSYTEEPITEIPGAKVFKSSSGNISLYCCSIFDFPRTNIGKLDMIWDRGALVAVNPGDRKRYADTMLSLLGKKFQCLLCVFSYDPTKHPGPPFYVPHAEIERLFGKICNIHCLEKVDAFEERHKSWGIDYLLEKLYLLTEK</sequence>
<name>TPMT_CHLAE</name>
<gene>
    <name type="primary">TPMT</name>
</gene>
<comment type="catalytic activity">
    <reaction evidence="2">
        <text>S-adenosyl-L-methionine + a thiopurine = S-adenosyl-L-homocysteine + a thiopurine S-methylether.</text>
        <dbReference type="EC" id="2.1.1.67"/>
    </reaction>
</comment>
<comment type="subunit">
    <text evidence="2">Monomer.</text>
</comment>
<comment type="subcellular location">
    <subcellularLocation>
        <location>Cytoplasm</location>
    </subcellularLocation>
</comment>
<comment type="similarity">
    <text evidence="3">Belongs to the class I-like SAM-binding methyltransferase superfamily. TPMT family.</text>
</comment>
<protein>
    <recommendedName>
        <fullName>Thiopurine S-methyltransferase</fullName>
        <ecNumber>2.1.1.67</ecNumber>
    </recommendedName>
    <alternativeName>
        <fullName>Thiopurine methyltransferase</fullName>
    </alternativeName>
</protein>